<name>Y054_ATV</name>
<keyword id="KW-1185">Reference proteome</keyword>
<organism>
    <name type="scientific">Acidianus two-tailed virus</name>
    <name type="common">ATV</name>
    <dbReference type="NCBI Taxonomy" id="315953"/>
    <lineage>
        <taxon>Viruses</taxon>
        <taxon>Viruses incertae sedis</taxon>
        <taxon>Bicaudaviridae</taxon>
        <taxon>Bicaudavirus</taxon>
    </lineage>
</organism>
<feature type="chain" id="PRO_0000389081" description="Uncharacterized protein ORF54">
    <location>
        <begin position="1"/>
        <end position="54"/>
    </location>
</feature>
<feature type="region of interest" description="Disordered" evidence="1">
    <location>
        <begin position="34"/>
        <end position="54"/>
    </location>
</feature>
<sequence>MQLPATGTEHERTEKDTIIISNLRKIVEKRYAENNREKQKSGKLRELRRGFKTF</sequence>
<reference key="1">
    <citation type="journal article" date="2005" name="Nature">
        <title>Virology: independent virus development outside a host.</title>
        <authorList>
            <person name="Haring M."/>
            <person name="Vestergaard G."/>
            <person name="Rachel R."/>
            <person name="Chen L."/>
            <person name="Garrett R.A."/>
            <person name="Prangishvili D."/>
        </authorList>
    </citation>
    <scope>NUCLEOTIDE SEQUENCE [GENOMIC DNA]</scope>
</reference>
<evidence type="ECO:0000256" key="1">
    <source>
        <dbReference type="SAM" id="MobiDB-lite"/>
    </source>
</evidence>
<protein>
    <recommendedName>
        <fullName>Uncharacterized protein ORF54</fullName>
    </recommendedName>
</protein>
<organismHost>
    <name type="scientific">Acidianus convivator</name>
    <dbReference type="NCBI Taxonomy" id="269667"/>
</organismHost>
<accession>Q3V4X0</accession>
<proteinExistence type="predicted"/>
<dbReference type="EMBL" id="AJ888457">
    <property type="protein sequence ID" value="CAI59844.1"/>
    <property type="molecule type" value="Genomic_DNA"/>
</dbReference>
<dbReference type="RefSeq" id="YP_319832.1">
    <property type="nucleotide sequence ID" value="NC_007409.1"/>
</dbReference>
<dbReference type="SMR" id="Q3V4X0"/>
<dbReference type="GeneID" id="4484219"/>
<dbReference type="KEGG" id="vg:4484219"/>
<dbReference type="Proteomes" id="UP000002150">
    <property type="component" value="Genome"/>
</dbReference>